<geneLocation type="chloroplast"/>
<feature type="chain" id="PRO_0000157621" description="Large ribosomal subunit protein bL12c">
    <location>
        <begin position="1"/>
        <end position="127"/>
    </location>
</feature>
<feature type="region of interest" description="Disordered" evidence="2">
    <location>
        <begin position="104"/>
        <end position="127"/>
    </location>
</feature>
<feature type="compositionally biased region" description="Basic and acidic residues" evidence="2">
    <location>
        <begin position="105"/>
        <end position="121"/>
    </location>
</feature>
<accession>P49550</accession>
<evidence type="ECO:0000255" key="1">
    <source>
        <dbReference type="HAMAP-Rule" id="MF_00368"/>
    </source>
</evidence>
<evidence type="ECO:0000256" key="2">
    <source>
        <dbReference type="SAM" id="MobiDB-lite"/>
    </source>
</evidence>
<evidence type="ECO:0000305" key="3"/>
<comment type="function">
    <text evidence="1">Forms part of the ribosomal stalk which helps the ribosome interact with GTP-bound translation factors. Is thus essential for accurate translation.</text>
</comment>
<comment type="subunit">
    <text evidence="1">Homodimer. Part of the ribosomal stalk of the 50S ribosomal subunit. Forms a multimeric L10(L12)X complex, where L10 forms an elongated spine to which 2 to 4 L12 dimers bind in a sequential fashion. Binds GTP-bound translation factors.</text>
</comment>
<comment type="subcellular location">
    <subcellularLocation>
        <location>Plastid</location>
        <location>Chloroplast</location>
    </subcellularLocation>
</comment>
<comment type="similarity">
    <text evidence="1">Belongs to the bacterial ribosomal protein bL12 family.</text>
</comment>
<name>RK12_TRICV</name>
<dbReference type="EMBL" id="Z67753">
    <property type="protein sequence ID" value="CAA91725.1"/>
    <property type="molecule type" value="Genomic_DNA"/>
</dbReference>
<dbReference type="PIR" id="S78352">
    <property type="entry name" value="S78352"/>
</dbReference>
<dbReference type="RefSeq" id="NP_043693.1">
    <property type="nucleotide sequence ID" value="NC_001713.1"/>
</dbReference>
<dbReference type="SMR" id="P49550"/>
<dbReference type="GeneID" id="801751"/>
<dbReference type="GO" id="GO:0009507">
    <property type="term" value="C:chloroplast"/>
    <property type="evidence" value="ECO:0007669"/>
    <property type="project" value="UniProtKB-SubCell"/>
</dbReference>
<dbReference type="GO" id="GO:0022625">
    <property type="term" value="C:cytosolic large ribosomal subunit"/>
    <property type="evidence" value="ECO:0007669"/>
    <property type="project" value="TreeGrafter"/>
</dbReference>
<dbReference type="GO" id="GO:0003729">
    <property type="term" value="F:mRNA binding"/>
    <property type="evidence" value="ECO:0007669"/>
    <property type="project" value="TreeGrafter"/>
</dbReference>
<dbReference type="GO" id="GO:0003735">
    <property type="term" value="F:structural constituent of ribosome"/>
    <property type="evidence" value="ECO:0007669"/>
    <property type="project" value="InterPro"/>
</dbReference>
<dbReference type="GO" id="GO:0006412">
    <property type="term" value="P:translation"/>
    <property type="evidence" value="ECO:0007669"/>
    <property type="project" value="UniProtKB-UniRule"/>
</dbReference>
<dbReference type="CDD" id="cd00387">
    <property type="entry name" value="Ribosomal_L7_L12"/>
    <property type="match status" value="1"/>
</dbReference>
<dbReference type="FunFam" id="3.30.1390.10:FF:000001">
    <property type="entry name" value="50S ribosomal protein L7/L12"/>
    <property type="match status" value="1"/>
</dbReference>
<dbReference type="Gene3D" id="3.30.1390.10">
    <property type="match status" value="1"/>
</dbReference>
<dbReference type="Gene3D" id="1.20.5.710">
    <property type="entry name" value="Single helix bin"/>
    <property type="match status" value="1"/>
</dbReference>
<dbReference type="HAMAP" id="MF_00368">
    <property type="entry name" value="Ribosomal_bL12"/>
    <property type="match status" value="1"/>
</dbReference>
<dbReference type="InterPro" id="IPR000206">
    <property type="entry name" value="Ribosomal_bL12"/>
</dbReference>
<dbReference type="InterPro" id="IPR013823">
    <property type="entry name" value="Ribosomal_bL12_C"/>
</dbReference>
<dbReference type="InterPro" id="IPR014719">
    <property type="entry name" value="Ribosomal_bL12_C/ClpS-like"/>
</dbReference>
<dbReference type="InterPro" id="IPR008932">
    <property type="entry name" value="Ribosomal_bL12_oligo"/>
</dbReference>
<dbReference type="InterPro" id="IPR036235">
    <property type="entry name" value="Ribosomal_bL12_oligo_N_sf"/>
</dbReference>
<dbReference type="NCBIfam" id="TIGR00855">
    <property type="entry name" value="L12"/>
    <property type="match status" value="1"/>
</dbReference>
<dbReference type="PANTHER" id="PTHR45987">
    <property type="entry name" value="39S RIBOSOMAL PROTEIN L12"/>
    <property type="match status" value="1"/>
</dbReference>
<dbReference type="PANTHER" id="PTHR45987:SF4">
    <property type="entry name" value="LARGE RIBOSOMAL SUBUNIT PROTEIN BL12M"/>
    <property type="match status" value="1"/>
</dbReference>
<dbReference type="Pfam" id="PF00542">
    <property type="entry name" value="Ribosomal_L12"/>
    <property type="match status" value="1"/>
</dbReference>
<dbReference type="Pfam" id="PF16320">
    <property type="entry name" value="Ribosomal_L12_N"/>
    <property type="match status" value="1"/>
</dbReference>
<dbReference type="SUPFAM" id="SSF54736">
    <property type="entry name" value="ClpS-like"/>
    <property type="match status" value="1"/>
</dbReference>
<dbReference type="SUPFAM" id="SSF48300">
    <property type="entry name" value="Ribosomal protein L7/12, oligomerisation (N-terminal) domain"/>
    <property type="match status" value="1"/>
</dbReference>
<gene>
    <name evidence="1" type="primary">rpl12</name>
</gene>
<reference key="1">
    <citation type="journal article" date="1995" name="Plant Mol. Biol. Rep.">
        <title>The chloroplast genome of a chlorophyll a+c-containing alga, Odontella sinensis.</title>
        <authorList>
            <person name="Kowallik K.V."/>
            <person name="Stoebe B."/>
            <person name="Schaffran I."/>
            <person name="Kroth-Pancic P."/>
            <person name="Freier U."/>
        </authorList>
    </citation>
    <scope>NUCLEOTIDE SEQUENCE [LARGE SCALE GENOMIC DNA]</scope>
</reference>
<keyword id="KW-0150">Chloroplast</keyword>
<keyword id="KW-0934">Plastid</keyword>
<keyword id="KW-0687">Ribonucleoprotein</keyword>
<keyword id="KW-0689">Ribosomal protein</keyword>
<organism>
    <name type="scientific">Trieres chinensis</name>
    <name type="common">Marine centric diatom</name>
    <name type="synonym">Odontella sinensis</name>
    <dbReference type="NCBI Taxonomy" id="1514140"/>
    <lineage>
        <taxon>Eukaryota</taxon>
        <taxon>Sar</taxon>
        <taxon>Stramenopiles</taxon>
        <taxon>Ochrophyta</taxon>
        <taxon>Bacillariophyta</taxon>
        <taxon>Mediophyceae</taxon>
        <taxon>Biddulphiophycidae</taxon>
        <taxon>Eupodiscales</taxon>
        <taxon>Parodontellaceae</taxon>
        <taxon>Trieres</taxon>
    </lineage>
</organism>
<sequence>MSEKIDQIVEELKTLTLLEASELVSKIEETFDVDASASVGGGMMMAGPAVVEEVEEKTEFDVMLDEVPADKKIAVLKVVRSLTGLGLKEAKELVESAPKQIQEGVAKDAAEEAKKQIEDAGGKASLK</sequence>
<proteinExistence type="inferred from homology"/>
<protein>
    <recommendedName>
        <fullName evidence="1">Large ribosomal subunit protein bL12c</fullName>
    </recommendedName>
    <alternativeName>
        <fullName evidence="3">50S ribosomal protein L12, chloroplastic</fullName>
    </alternativeName>
</protein>